<feature type="initiator methionine" description="Removed" evidence="1">
    <location>
        <position position="1"/>
    </location>
</feature>
<feature type="chain" id="PRO_0000294402" description="Malate dehydrogenase">
    <location>
        <begin position="2"/>
        <end position="327"/>
    </location>
</feature>
<feature type="active site" description="Proton acceptor" evidence="2">
    <location>
        <position position="188"/>
    </location>
</feature>
<feature type="binding site" evidence="2">
    <location>
        <begin position="12"/>
        <end position="18"/>
    </location>
    <ligand>
        <name>NAD(+)</name>
        <dbReference type="ChEBI" id="CHEBI:57540"/>
    </ligand>
</feature>
<feature type="binding site" evidence="2">
    <location>
        <position position="93"/>
    </location>
    <ligand>
        <name>substrate</name>
    </ligand>
</feature>
<feature type="binding site" evidence="2">
    <location>
        <position position="99"/>
    </location>
    <ligand>
        <name>substrate</name>
    </ligand>
</feature>
<feature type="binding site" evidence="2">
    <location>
        <position position="106"/>
    </location>
    <ligand>
        <name>NAD(+)</name>
        <dbReference type="ChEBI" id="CHEBI:57540"/>
    </ligand>
</feature>
<feature type="binding site" evidence="2">
    <location>
        <position position="113"/>
    </location>
    <ligand>
        <name>NAD(+)</name>
        <dbReference type="ChEBI" id="CHEBI:57540"/>
    </ligand>
</feature>
<feature type="binding site" evidence="2">
    <location>
        <begin position="130"/>
        <end position="132"/>
    </location>
    <ligand>
        <name>NAD(+)</name>
        <dbReference type="ChEBI" id="CHEBI:57540"/>
    </ligand>
</feature>
<feature type="binding site" evidence="2">
    <location>
        <position position="132"/>
    </location>
    <ligand>
        <name>substrate</name>
    </ligand>
</feature>
<feature type="binding site" evidence="2">
    <location>
        <position position="163"/>
    </location>
    <ligand>
        <name>substrate</name>
    </ligand>
</feature>
<keyword id="KW-0520">NAD</keyword>
<keyword id="KW-0560">Oxidoreductase</keyword>
<keyword id="KW-1185">Reference proteome</keyword>
<keyword id="KW-0816">Tricarboxylic acid cycle</keyword>
<protein>
    <recommendedName>
        <fullName evidence="2">Malate dehydrogenase</fullName>
        <ecNumber evidence="2">1.1.1.37</ecNumber>
    </recommendedName>
</protein>
<comment type="function">
    <text evidence="2">Catalyzes the reversible oxidation of malate to oxaloacetate.</text>
</comment>
<comment type="catalytic activity">
    <reaction evidence="2">
        <text>(S)-malate + NAD(+) = oxaloacetate + NADH + H(+)</text>
        <dbReference type="Rhea" id="RHEA:21432"/>
        <dbReference type="ChEBI" id="CHEBI:15378"/>
        <dbReference type="ChEBI" id="CHEBI:15589"/>
        <dbReference type="ChEBI" id="CHEBI:16452"/>
        <dbReference type="ChEBI" id="CHEBI:57540"/>
        <dbReference type="ChEBI" id="CHEBI:57945"/>
        <dbReference type="EC" id="1.1.1.37"/>
    </reaction>
</comment>
<comment type="similarity">
    <text evidence="2">Belongs to the LDH/MDH superfamily. MDH type 2 family.</text>
</comment>
<name>MDH_CUPMC</name>
<sequence length="327" mass="35163">MAKAPMRVAVTGAAGQIGYSLLFRIANGDMLGKDQPVILQLLDLPQAQAAVKGVVMELEDCAFPLLAGVVITDDPKVAFKDADVALLVGARPRSKGMERKDLLEANAQIFTVQGKALDEVASRDVKVLVVGNPANTNAYIAMKSAPNLKRENFTAMLRLDHNRALSQIAAKTGKPVSSIEKMFVWGNHSPTMYADYRYATVDGKSVKDMINDPVWNNDVFLPTVGKRGAAIIEARGLSSAASAANAAIDHVHDWVLGSNGKVVTMGIPSNGEYGIPNDVMFGYPVTTANGKYEIVKGLEIDAYSQEKINITLKELEEERAGVQHLLG</sequence>
<organism>
    <name type="scientific">Cupriavidus metallidurans (strain ATCC 43123 / DSM 2839 / NBRC 102507 / CH34)</name>
    <name type="common">Ralstonia metallidurans</name>
    <dbReference type="NCBI Taxonomy" id="266264"/>
    <lineage>
        <taxon>Bacteria</taxon>
        <taxon>Pseudomonadati</taxon>
        <taxon>Pseudomonadota</taxon>
        <taxon>Betaproteobacteria</taxon>
        <taxon>Burkholderiales</taxon>
        <taxon>Burkholderiaceae</taxon>
        <taxon>Cupriavidus</taxon>
    </lineage>
</organism>
<accession>Q1LKG0</accession>
<gene>
    <name evidence="2" type="primary">mdh</name>
    <name type="ordered locus">Rmet_2489</name>
</gene>
<proteinExistence type="inferred from homology"/>
<reference key="1">
    <citation type="journal article" date="2010" name="PLoS ONE">
        <title>The complete genome sequence of Cupriavidus metallidurans strain CH34, a master survivalist in harsh and anthropogenic environments.</title>
        <authorList>
            <person name="Janssen P.J."/>
            <person name="Van Houdt R."/>
            <person name="Moors H."/>
            <person name="Monsieurs P."/>
            <person name="Morin N."/>
            <person name="Michaux A."/>
            <person name="Benotmane M.A."/>
            <person name="Leys N."/>
            <person name="Vallaeys T."/>
            <person name="Lapidus A."/>
            <person name="Monchy S."/>
            <person name="Medigue C."/>
            <person name="Taghavi S."/>
            <person name="McCorkle S."/>
            <person name="Dunn J."/>
            <person name="van der Lelie D."/>
            <person name="Mergeay M."/>
        </authorList>
    </citation>
    <scope>NUCLEOTIDE SEQUENCE [LARGE SCALE GENOMIC DNA]</scope>
    <source>
        <strain>ATCC 43123 / DSM 2839 / NBRC 102507 / CH34</strain>
    </source>
</reference>
<evidence type="ECO:0000250" key="1"/>
<evidence type="ECO:0000255" key="2">
    <source>
        <dbReference type="HAMAP-Rule" id="MF_01517"/>
    </source>
</evidence>
<dbReference type="EC" id="1.1.1.37" evidence="2"/>
<dbReference type="EMBL" id="CP000352">
    <property type="protein sequence ID" value="ABF09366.1"/>
    <property type="molecule type" value="Genomic_DNA"/>
</dbReference>
<dbReference type="RefSeq" id="WP_008649349.1">
    <property type="nucleotide sequence ID" value="NC_007973.1"/>
</dbReference>
<dbReference type="SMR" id="Q1LKG0"/>
<dbReference type="STRING" id="266264.Rmet_2489"/>
<dbReference type="KEGG" id="rme:Rmet_2489"/>
<dbReference type="eggNOG" id="COG0039">
    <property type="taxonomic scope" value="Bacteria"/>
</dbReference>
<dbReference type="HOGENOM" id="CLU_040727_2_0_4"/>
<dbReference type="Proteomes" id="UP000002429">
    <property type="component" value="Chromosome"/>
</dbReference>
<dbReference type="GO" id="GO:0030060">
    <property type="term" value="F:L-malate dehydrogenase (NAD+) activity"/>
    <property type="evidence" value="ECO:0007669"/>
    <property type="project" value="UniProtKB-UniRule"/>
</dbReference>
<dbReference type="GO" id="GO:0006108">
    <property type="term" value="P:malate metabolic process"/>
    <property type="evidence" value="ECO:0007669"/>
    <property type="project" value="InterPro"/>
</dbReference>
<dbReference type="GO" id="GO:0006099">
    <property type="term" value="P:tricarboxylic acid cycle"/>
    <property type="evidence" value="ECO:0007669"/>
    <property type="project" value="UniProtKB-UniRule"/>
</dbReference>
<dbReference type="CDD" id="cd01338">
    <property type="entry name" value="MDH_chloroplast-like"/>
    <property type="match status" value="1"/>
</dbReference>
<dbReference type="FunFam" id="3.40.50.720:FF:000010">
    <property type="entry name" value="Malate dehydrogenase"/>
    <property type="match status" value="1"/>
</dbReference>
<dbReference type="FunFam" id="3.90.110.10:FF:000002">
    <property type="entry name" value="Malate dehydrogenase"/>
    <property type="match status" value="1"/>
</dbReference>
<dbReference type="Gene3D" id="3.90.110.10">
    <property type="entry name" value="Lactate dehydrogenase/glycoside hydrolase, family 4, C-terminal"/>
    <property type="match status" value="1"/>
</dbReference>
<dbReference type="Gene3D" id="3.40.50.720">
    <property type="entry name" value="NAD(P)-binding Rossmann-like Domain"/>
    <property type="match status" value="1"/>
</dbReference>
<dbReference type="HAMAP" id="MF_01517">
    <property type="entry name" value="Malate_dehydrog_2"/>
    <property type="match status" value="1"/>
</dbReference>
<dbReference type="InterPro" id="IPR001557">
    <property type="entry name" value="L-lactate/malate_DH"/>
</dbReference>
<dbReference type="InterPro" id="IPR022383">
    <property type="entry name" value="Lactate/malate_DH_C"/>
</dbReference>
<dbReference type="InterPro" id="IPR001236">
    <property type="entry name" value="Lactate/malate_DH_N"/>
</dbReference>
<dbReference type="InterPro" id="IPR015955">
    <property type="entry name" value="Lactate_DH/Glyco_Ohase_4_C"/>
</dbReference>
<dbReference type="InterPro" id="IPR010945">
    <property type="entry name" value="Malate_DH_type2"/>
</dbReference>
<dbReference type="InterPro" id="IPR036291">
    <property type="entry name" value="NAD(P)-bd_dom_sf"/>
</dbReference>
<dbReference type="NCBIfam" id="TIGR01759">
    <property type="entry name" value="MalateDH-SF1"/>
    <property type="match status" value="1"/>
</dbReference>
<dbReference type="NCBIfam" id="NF003916">
    <property type="entry name" value="PRK05442.1"/>
    <property type="match status" value="1"/>
</dbReference>
<dbReference type="PANTHER" id="PTHR23382">
    <property type="entry name" value="MALATE DEHYDROGENASE"/>
    <property type="match status" value="1"/>
</dbReference>
<dbReference type="Pfam" id="PF02866">
    <property type="entry name" value="Ldh_1_C"/>
    <property type="match status" value="1"/>
</dbReference>
<dbReference type="Pfam" id="PF00056">
    <property type="entry name" value="Ldh_1_N"/>
    <property type="match status" value="1"/>
</dbReference>
<dbReference type="PIRSF" id="PIRSF000102">
    <property type="entry name" value="Lac_mal_DH"/>
    <property type="match status" value="1"/>
</dbReference>
<dbReference type="SUPFAM" id="SSF56327">
    <property type="entry name" value="LDH C-terminal domain-like"/>
    <property type="match status" value="1"/>
</dbReference>
<dbReference type="SUPFAM" id="SSF51735">
    <property type="entry name" value="NAD(P)-binding Rossmann-fold domains"/>
    <property type="match status" value="1"/>
</dbReference>